<gene>
    <name type="primary">drkC</name>
    <name type="synonym">rk3</name>
    <name type="ORF">DDB_G0281899</name>
</gene>
<name>DRKC_DICDI</name>
<feature type="signal peptide" evidence="1">
    <location>
        <begin position="1"/>
        <end position="31"/>
    </location>
</feature>
<feature type="chain" id="PRO_0000358883" description="Probable serine/threonine-protein kinase drkC">
    <location>
        <begin position="32"/>
        <end position="749"/>
    </location>
</feature>
<feature type="topological domain" description="Extracellular" evidence="1">
    <location>
        <begin position="32"/>
        <end position="423"/>
    </location>
</feature>
<feature type="transmembrane region" description="Helical" evidence="1">
    <location>
        <begin position="424"/>
        <end position="444"/>
    </location>
</feature>
<feature type="topological domain" description="Cytoplasmic" evidence="1">
    <location>
        <begin position="445"/>
        <end position="749"/>
    </location>
</feature>
<feature type="domain" description="Protein kinase" evidence="2">
    <location>
        <begin position="491"/>
        <end position="749"/>
    </location>
</feature>
<feature type="region of interest" description="Disordered" evidence="4">
    <location>
        <begin position="124"/>
        <end position="153"/>
    </location>
</feature>
<feature type="compositionally biased region" description="Low complexity" evidence="4">
    <location>
        <begin position="130"/>
        <end position="139"/>
    </location>
</feature>
<feature type="active site" description="Proton acceptor" evidence="2 3">
    <location>
        <position position="615"/>
    </location>
</feature>
<feature type="binding site" evidence="2">
    <location>
        <begin position="497"/>
        <end position="505"/>
    </location>
    <ligand>
        <name>ATP</name>
        <dbReference type="ChEBI" id="CHEBI:30616"/>
    </ligand>
</feature>
<feature type="binding site" evidence="2">
    <location>
        <position position="518"/>
    </location>
    <ligand>
        <name>ATP</name>
        <dbReference type="ChEBI" id="CHEBI:30616"/>
    </ligand>
</feature>
<feature type="glycosylation site" description="N-linked (GlcNAc...) asparagine" evidence="1">
    <location>
        <position position="157"/>
    </location>
</feature>
<feature type="glycosylation site" description="N-linked (GlcNAc...) asparagine" evidence="1">
    <location>
        <position position="189"/>
    </location>
</feature>
<feature type="glycosylation site" description="N-linked (GlcNAc...) asparagine" evidence="1">
    <location>
        <position position="283"/>
    </location>
</feature>
<feature type="glycosylation site" description="N-linked (GlcNAc...) asparagine" evidence="1">
    <location>
        <position position="358"/>
    </location>
</feature>
<feature type="glycosylation site" description="N-linked (GlcNAc...) asparagine" evidence="1">
    <location>
        <position position="373"/>
    </location>
</feature>
<feature type="glycosylation site" description="N-linked (GlcNAc...) asparagine" evidence="1">
    <location>
        <position position="381"/>
    </location>
</feature>
<feature type="glycosylation site" description="N-linked (GlcNAc...) asparagine" evidence="1">
    <location>
        <position position="397"/>
    </location>
</feature>
<keyword id="KW-0067">ATP-binding</keyword>
<keyword id="KW-0325">Glycoprotein</keyword>
<keyword id="KW-0418">Kinase</keyword>
<keyword id="KW-0472">Membrane</keyword>
<keyword id="KW-0547">Nucleotide-binding</keyword>
<keyword id="KW-1185">Reference proteome</keyword>
<keyword id="KW-0723">Serine/threonine-protein kinase</keyword>
<keyword id="KW-0732">Signal</keyword>
<keyword id="KW-0808">Transferase</keyword>
<keyword id="KW-0812">Transmembrane</keyword>
<keyword id="KW-1133">Transmembrane helix</keyword>
<organism>
    <name type="scientific">Dictyostelium discoideum</name>
    <name type="common">Social amoeba</name>
    <dbReference type="NCBI Taxonomy" id="44689"/>
    <lineage>
        <taxon>Eukaryota</taxon>
        <taxon>Amoebozoa</taxon>
        <taxon>Evosea</taxon>
        <taxon>Eumycetozoa</taxon>
        <taxon>Dictyostelia</taxon>
        <taxon>Dictyosteliales</taxon>
        <taxon>Dictyosteliaceae</taxon>
        <taxon>Dictyostelium</taxon>
    </lineage>
</organism>
<dbReference type="EC" id="2.7.11.1"/>
<dbReference type="EMBL" id="AAFI02000043">
    <property type="protein sequence ID" value="EAL66509.1"/>
    <property type="molecule type" value="Genomic_DNA"/>
</dbReference>
<dbReference type="RefSeq" id="XP_640488.1">
    <property type="nucleotide sequence ID" value="XM_635396.1"/>
</dbReference>
<dbReference type="SMR" id="Q54TA1"/>
<dbReference type="FunCoup" id="Q54TA1">
    <property type="interactions" value="1"/>
</dbReference>
<dbReference type="STRING" id="44689.Q54TA1"/>
<dbReference type="GlyCosmos" id="Q54TA1">
    <property type="glycosylation" value="7 sites, No reported glycans"/>
</dbReference>
<dbReference type="GlyGen" id="Q54TA1">
    <property type="glycosylation" value="7 sites"/>
</dbReference>
<dbReference type="PaxDb" id="44689-DDB0229964"/>
<dbReference type="EnsemblProtists" id="EAL66509">
    <property type="protein sequence ID" value="EAL66509"/>
    <property type="gene ID" value="DDB_G0281899"/>
</dbReference>
<dbReference type="GeneID" id="8623302"/>
<dbReference type="KEGG" id="ddi:DDB_G0281899"/>
<dbReference type="dictyBase" id="DDB_G0281899">
    <property type="gene designation" value="drkC"/>
</dbReference>
<dbReference type="VEuPathDB" id="AmoebaDB:DDB_G0281899"/>
<dbReference type="eggNOG" id="KOG0192">
    <property type="taxonomic scope" value="Eukaryota"/>
</dbReference>
<dbReference type="HOGENOM" id="CLU_371524_0_0_1"/>
<dbReference type="InParanoid" id="Q54TA1"/>
<dbReference type="OMA" id="WEIVTRE"/>
<dbReference type="Reactome" id="R-DDI-5675482">
    <property type="pathway name" value="Regulation of necroptotic cell death"/>
</dbReference>
<dbReference type="PRO" id="PR:Q54TA1"/>
<dbReference type="Proteomes" id="UP000002195">
    <property type="component" value="Chromosome 3"/>
</dbReference>
<dbReference type="GO" id="GO:0005737">
    <property type="term" value="C:cytoplasm"/>
    <property type="evidence" value="ECO:0000318"/>
    <property type="project" value="GO_Central"/>
</dbReference>
<dbReference type="GO" id="GO:0030670">
    <property type="term" value="C:phagocytic vesicle membrane"/>
    <property type="evidence" value="ECO:0000314"/>
    <property type="project" value="dictyBase"/>
</dbReference>
<dbReference type="GO" id="GO:0032010">
    <property type="term" value="C:phagolysosome"/>
    <property type="evidence" value="ECO:0000314"/>
    <property type="project" value="dictyBase"/>
</dbReference>
<dbReference type="GO" id="GO:0005524">
    <property type="term" value="F:ATP binding"/>
    <property type="evidence" value="ECO:0000305"/>
    <property type="project" value="dictyBase"/>
</dbReference>
<dbReference type="GO" id="GO:0004672">
    <property type="term" value="F:protein kinase activity"/>
    <property type="evidence" value="ECO:0000318"/>
    <property type="project" value="GO_Central"/>
</dbReference>
<dbReference type="GO" id="GO:0106310">
    <property type="term" value="F:protein serine kinase activity"/>
    <property type="evidence" value="ECO:0007669"/>
    <property type="project" value="RHEA"/>
</dbReference>
<dbReference type="GO" id="GO:0004674">
    <property type="term" value="F:protein serine/threonine kinase activity"/>
    <property type="evidence" value="ECO:0007669"/>
    <property type="project" value="UniProtKB-KW"/>
</dbReference>
<dbReference type="GO" id="GO:0004713">
    <property type="term" value="F:protein tyrosine kinase activity"/>
    <property type="evidence" value="ECO:0000314"/>
    <property type="project" value="dictyBase"/>
</dbReference>
<dbReference type="GO" id="GO:0006909">
    <property type="term" value="P:phagocytosis"/>
    <property type="evidence" value="ECO:0000315"/>
    <property type="project" value="dictyBase"/>
</dbReference>
<dbReference type="GO" id="GO:0001845">
    <property type="term" value="P:phagolysosome assembly"/>
    <property type="evidence" value="ECO:0000315"/>
    <property type="project" value="dictyBase"/>
</dbReference>
<dbReference type="GO" id="GO:0007165">
    <property type="term" value="P:signal transduction"/>
    <property type="evidence" value="ECO:0000318"/>
    <property type="project" value="GO_Central"/>
</dbReference>
<dbReference type="CDD" id="cd00102">
    <property type="entry name" value="IPT"/>
    <property type="match status" value="1"/>
</dbReference>
<dbReference type="CDD" id="cd13999">
    <property type="entry name" value="STKc_MAP3K-like"/>
    <property type="match status" value="1"/>
</dbReference>
<dbReference type="FunFam" id="3.30.200.20:FF:000034">
    <property type="entry name" value="Kinase suppressor of Ras 1"/>
    <property type="match status" value="1"/>
</dbReference>
<dbReference type="FunFam" id="1.10.510.10:FF:000476">
    <property type="entry name" value="PAS domain-containing protein tyrosine kinase family protein"/>
    <property type="match status" value="1"/>
</dbReference>
<dbReference type="Gene3D" id="2.60.40.10">
    <property type="entry name" value="Immunoglobulins"/>
    <property type="match status" value="1"/>
</dbReference>
<dbReference type="Gene3D" id="3.30.200.20">
    <property type="entry name" value="Phosphorylase Kinase, domain 1"/>
    <property type="match status" value="1"/>
</dbReference>
<dbReference type="Gene3D" id="1.10.510.10">
    <property type="entry name" value="Transferase(Phosphotransferase) domain 1"/>
    <property type="match status" value="1"/>
</dbReference>
<dbReference type="InterPro" id="IPR013783">
    <property type="entry name" value="Ig-like_fold"/>
</dbReference>
<dbReference type="InterPro" id="IPR014756">
    <property type="entry name" value="Ig_E-set"/>
</dbReference>
<dbReference type="InterPro" id="IPR002909">
    <property type="entry name" value="IPT_dom"/>
</dbReference>
<dbReference type="InterPro" id="IPR011009">
    <property type="entry name" value="Kinase-like_dom_sf"/>
</dbReference>
<dbReference type="InterPro" id="IPR000719">
    <property type="entry name" value="Prot_kinase_dom"/>
</dbReference>
<dbReference type="InterPro" id="IPR001245">
    <property type="entry name" value="Ser-Thr/Tyr_kinase_cat_dom"/>
</dbReference>
<dbReference type="InterPro" id="IPR008271">
    <property type="entry name" value="Ser/Thr_kinase_AS"/>
</dbReference>
<dbReference type="InterPro" id="IPR051681">
    <property type="entry name" value="Ser/Thr_Kinases-Pseudokinases"/>
</dbReference>
<dbReference type="PANTHER" id="PTHR44329:SF298">
    <property type="entry name" value="MIXED LINEAGE KINASE DOMAIN-LIKE PROTEIN"/>
    <property type="match status" value="1"/>
</dbReference>
<dbReference type="PANTHER" id="PTHR44329">
    <property type="entry name" value="SERINE/THREONINE-PROTEIN KINASE TNNI3K-RELATED"/>
    <property type="match status" value="1"/>
</dbReference>
<dbReference type="Pfam" id="PF07714">
    <property type="entry name" value="PK_Tyr_Ser-Thr"/>
    <property type="match status" value="1"/>
</dbReference>
<dbReference type="Pfam" id="PF01833">
    <property type="entry name" value="TIG"/>
    <property type="match status" value="1"/>
</dbReference>
<dbReference type="PRINTS" id="PR00109">
    <property type="entry name" value="TYRKINASE"/>
</dbReference>
<dbReference type="SMART" id="SM00220">
    <property type="entry name" value="S_TKc"/>
    <property type="match status" value="1"/>
</dbReference>
<dbReference type="SUPFAM" id="SSF81296">
    <property type="entry name" value="E set domains"/>
    <property type="match status" value="1"/>
</dbReference>
<dbReference type="SUPFAM" id="SSF56112">
    <property type="entry name" value="Protein kinase-like (PK-like)"/>
    <property type="match status" value="1"/>
</dbReference>
<dbReference type="PROSITE" id="PS50011">
    <property type="entry name" value="PROTEIN_KINASE_DOM"/>
    <property type="match status" value="1"/>
</dbReference>
<dbReference type="PROSITE" id="PS00108">
    <property type="entry name" value="PROTEIN_KINASE_ST"/>
    <property type="match status" value="1"/>
</dbReference>
<comment type="catalytic activity">
    <reaction>
        <text>L-seryl-[protein] + ATP = O-phospho-L-seryl-[protein] + ADP + H(+)</text>
        <dbReference type="Rhea" id="RHEA:17989"/>
        <dbReference type="Rhea" id="RHEA-COMP:9863"/>
        <dbReference type="Rhea" id="RHEA-COMP:11604"/>
        <dbReference type="ChEBI" id="CHEBI:15378"/>
        <dbReference type="ChEBI" id="CHEBI:29999"/>
        <dbReference type="ChEBI" id="CHEBI:30616"/>
        <dbReference type="ChEBI" id="CHEBI:83421"/>
        <dbReference type="ChEBI" id="CHEBI:456216"/>
        <dbReference type="EC" id="2.7.11.1"/>
    </reaction>
</comment>
<comment type="catalytic activity">
    <reaction>
        <text>L-threonyl-[protein] + ATP = O-phospho-L-threonyl-[protein] + ADP + H(+)</text>
        <dbReference type="Rhea" id="RHEA:46608"/>
        <dbReference type="Rhea" id="RHEA-COMP:11060"/>
        <dbReference type="Rhea" id="RHEA-COMP:11605"/>
        <dbReference type="ChEBI" id="CHEBI:15378"/>
        <dbReference type="ChEBI" id="CHEBI:30013"/>
        <dbReference type="ChEBI" id="CHEBI:30616"/>
        <dbReference type="ChEBI" id="CHEBI:61977"/>
        <dbReference type="ChEBI" id="CHEBI:456216"/>
        <dbReference type="EC" id="2.7.11.1"/>
    </reaction>
</comment>
<comment type="subcellular location">
    <subcellularLocation>
        <location evidence="5">Membrane</location>
        <topology evidence="5">Single-pass type I membrane protein</topology>
    </subcellularLocation>
</comment>
<comment type="similarity">
    <text evidence="5">Belongs to the protein kinase superfamily. TKL Ser/Thr protein kinase family.</text>
</comment>
<proteinExistence type="inferred from homology"/>
<evidence type="ECO:0000255" key="1"/>
<evidence type="ECO:0000255" key="2">
    <source>
        <dbReference type="PROSITE-ProRule" id="PRU00159"/>
    </source>
</evidence>
<evidence type="ECO:0000255" key="3">
    <source>
        <dbReference type="PROSITE-ProRule" id="PRU10027"/>
    </source>
</evidence>
<evidence type="ECO:0000256" key="4">
    <source>
        <dbReference type="SAM" id="MobiDB-lite"/>
    </source>
</evidence>
<evidence type="ECO:0000305" key="5"/>
<accession>Q54TA1</accession>
<protein>
    <recommendedName>
        <fullName>Probable serine/threonine-protein kinase drkC</fullName>
        <ecNumber>2.7.11.1</ecNumber>
    </recommendedName>
    <alternativeName>
        <fullName>Receptor-like kinase 3</fullName>
    </alternativeName>
    <alternativeName>
        <fullName>Receptor-like kinase C</fullName>
    </alternativeName>
    <alternativeName>
        <fullName>Vesicle-associated receptor tyrosine kinase-like protein 3</fullName>
    </alternativeName>
</protein>
<reference key="1">
    <citation type="journal article" date="2005" name="Nature">
        <title>The genome of the social amoeba Dictyostelium discoideum.</title>
        <authorList>
            <person name="Eichinger L."/>
            <person name="Pachebat J.A."/>
            <person name="Gloeckner G."/>
            <person name="Rajandream M.A."/>
            <person name="Sucgang R."/>
            <person name="Berriman M."/>
            <person name="Song J."/>
            <person name="Olsen R."/>
            <person name="Szafranski K."/>
            <person name="Xu Q."/>
            <person name="Tunggal B."/>
            <person name="Kummerfeld S."/>
            <person name="Madera M."/>
            <person name="Konfortov B.A."/>
            <person name="Rivero F."/>
            <person name="Bankier A.T."/>
            <person name="Lehmann R."/>
            <person name="Hamlin N."/>
            <person name="Davies R."/>
            <person name="Gaudet P."/>
            <person name="Fey P."/>
            <person name="Pilcher K."/>
            <person name="Chen G."/>
            <person name="Saunders D."/>
            <person name="Sodergren E.J."/>
            <person name="Davis P."/>
            <person name="Kerhornou A."/>
            <person name="Nie X."/>
            <person name="Hall N."/>
            <person name="Anjard C."/>
            <person name="Hemphill L."/>
            <person name="Bason N."/>
            <person name="Farbrother P."/>
            <person name="Desany B."/>
            <person name="Just E."/>
            <person name="Morio T."/>
            <person name="Rost R."/>
            <person name="Churcher C.M."/>
            <person name="Cooper J."/>
            <person name="Haydock S."/>
            <person name="van Driessche N."/>
            <person name="Cronin A."/>
            <person name="Goodhead I."/>
            <person name="Muzny D.M."/>
            <person name="Mourier T."/>
            <person name="Pain A."/>
            <person name="Lu M."/>
            <person name="Harper D."/>
            <person name="Lindsay R."/>
            <person name="Hauser H."/>
            <person name="James K.D."/>
            <person name="Quiles M."/>
            <person name="Madan Babu M."/>
            <person name="Saito T."/>
            <person name="Buchrieser C."/>
            <person name="Wardroper A."/>
            <person name="Felder M."/>
            <person name="Thangavelu M."/>
            <person name="Johnson D."/>
            <person name="Knights A."/>
            <person name="Loulseged H."/>
            <person name="Mungall K.L."/>
            <person name="Oliver K."/>
            <person name="Price C."/>
            <person name="Quail M.A."/>
            <person name="Urushihara H."/>
            <person name="Hernandez J."/>
            <person name="Rabbinowitsch E."/>
            <person name="Steffen D."/>
            <person name="Sanders M."/>
            <person name="Ma J."/>
            <person name="Kohara Y."/>
            <person name="Sharp S."/>
            <person name="Simmonds M.N."/>
            <person name="Spiegler S."/>
            <person name="Tivey A."/>
            <person name="Sugano S."/>
            <person name="White B."/>
            <person name="Walker D."/>
            <person name="Woodward J.R."/>
            <person name="Winckler T."/>
            <person name="Tanaka Y."/>
            <person name="Shaulsky G."/>
            <person name="Schleicher M."/>
            <person name="Weinstock G.M."/>
            <person name="Rosenthal A."/>
            <person name="Cox E.C."/>
            <person name="Chisholm R.L."/>
            <person name="Gibbs R.A."/>
            <person name="Loomis W.F."/>
            <person name="Platzer M."/>
            <person name="Kay R.R."/>
            <person name="Williams J.G."/>
            <person name="Dear P.H."/>
            <person name="Noegel A.A."/>
            <person name="Barrell B.G."/>
            <person name="Kuspa A."/>
        </authorList>
    </citation>
    <scope>NUCLEOTIDE SEQUENCE [LARGE SCALE GENOMIC DNA]</scope>
    <source>
        <strain>AX4</strain>
    </source>
</reference>
<sequence>MIIINKYIRMNKIAILFSFFILICCTGYSISYKINGINENKVLSLSSSPSPSSSSSSSQILEKGKEEIKKIKKTNKNKLLYNVAIVDLEPKLEIEQELLTRNNKKKMEMKEEMDIAMMMMKAADRTDQVSTSSSSSSFSEENKKSSSDDSAPAIQSNLTFSGYMTGGEQVCDPKSCNSPSVFTQNYLCNTSSAWANGYVFHDPVPPTGLFVVHKIVVTFTGMFNVIPPTSMVFSLVNGEENAGIFFISKSSPSQCPNCQISFSPRTLPDVDPNGLASYRYGSNNSIIFNLFETDVACIGKVTANIFYGPVAFKVNSVVPNTAPSTGGETVYFIGEQFYQSSQIQCKFGTVISTGTYINSTCASCVVPPMLQSNSTTPSDYNVTIQLSEDGGSSFCLNTTFFIYTAASIPFVKPTSPNYQKIIYIVVGVGIAVLLIIAVGIYFIIRLRIKNKRLNGSKHALPIGINDDERSPLLKTDYKTLFEIKPIDISEIVVQNRIGRGSCAEVFTGTWRGIIVAIKKAKLLNEDDEDFLNELAQEATIMSQLRHPNICQFLGTCNNPPEILIVMEYMPLGSLYRILHDPSISLDWPRMKSMALDIAKGMNYLHCCDPIVIHRDLKSHNLLVDEHYRVKISDFGLSTRFKKHLDKKTAMTPVGTPCWTAPEVLRNDPYTEKADVFSFAIVLWEIVTREDPYQGMPTFQIVISVGQHKLRPIVPPQVSAPFTRLITECWSEDPQQRPSFQEIVKRLEAM</sequence>